<accession>Q21FP8</accession>
<keyword id="KW-0997">Cell inner membrane</keyword>
<keyword id="KW-1003">Cell membrane</keyword>
<keyword id="KW-0472">Membrane</keyword>
<keyword id="KW-0653">Protein transport</keyword>
<keyword id="KW-1185">Reference proteome</keyword>
<keyword id="KW-0811">Translocation</keyword>
<keyword id="KW-0812">Transmembrane</keyword>
<keyword id="KW-1133">Transmembrane helix</keyword>
<keyword id="KW-0813">Transport</keyword>
<feature type="chain" id="PRO_0000336642" description="Sec-independent protein translocase protein TatA">
    <location>
        <begin position="1"/>
        <end position="83"/>
    </location>
</feature>
<feature type="transmembrane region" description="Helical" evidence="1">
    <location>
        <begin position="2"/>
        <end position="22"/>
    </location>
</feature>
<feature type="region of interest" description="Disordered" evidence="2">
    <location>
        <begin position="50"/>
        <end position="83"/>
    </location>
</feature>
<feature type="compositionally biased region" description="Basic and acidic residues" evidence="2">
    <location>
        <begin position="50"/>
        <end position="65"/>
    </location>
</feature>
<feature type="compositionally biased region" description="Basic and acidic residues" evidence="2">
    <location>
        <begin position="74"/>
        <end position="83"/>
    </location>
</feature>
<reference key="1">
    <citation type="journal article" date="2008" name="PLoS Genet.">
        <title>Complete genome sequence of the complex carbohydrate-degrading marine bacterium, Saccharophagus degradans strain 2-40 T.</title>
        <authorList>
            <person name="Weiner R.M."/>
            <person name="Taylor L.E. II"/>
            <person name="Henrissat B."/>
            <person name="Hauser L."/>
            <person name="Land M."/>
            <person name="Coutinho P.M."/>
            <person name="Rancurel C."/>
            <person name="Saunders E.H."/>
            <person name="Longmire A.G."/>
            <person name="Zhang H."/>
            <person name="Bayer E.A."/>
            <person name="Gilbert H.J."/>
            <person name="Larimer F."/>
            <person name="Zhulin I.B."/>
            <person name="Ekborg N.A."/>
            <person name="Lamed R."/>
            <person name="Richardson P.M."/>
            <person name="Borovok I."/>
            <person name="Hutcheson S."/>
        </authorList>
    </citation>
    <scope>NUCLEOTIDE SEQUENCE [LARGE SCALE GENOMIC DNA]</scope>
    <source>
        <strain>2-40 / ATCC 43961 / DSM 17024</strain>
    </source>
</reference>
<dbReference type="EMBL" id="CP000282">
    <property type="protein sequence ID" value="ABD82481.1"/>
    <property type="molecule type" value="Genomic_DNA"/>
</dbReference>
<dbReference type="RefSeq" id="WP_011469697.1">
    <property type="nucleotide sequence ID" value="NC_007912.1"/>
</dbReference>
<dbReference type="SMR" id="Q21FP8"/>
<dbReference type="STRING" id="203122.Sde_3224"/>
<dbReference type="GeneID" id="98614849"/>
<dbReference type="KEGG" id="sde:Sde_3224"/>
<dbReference type="eggNOG" id="COG1826">
    <property type="taxonomic scope" value="Bacteria"/>
</dbReference>
<dbReference type="HOGENOM" id="CLU_086034_5_1_6"/>
<dbReference type="Proteomes" id="UP000001947">
    <property type="component" value="Chromosome"/>
</dbReference>
<dbReference type="GO" id="GO:0033281">
    <property type="term" value="C:TAT protein transport complex"/>
    <property type="evidence" value="ECO:0007669"/>
    <property type="project" value="UniProtKB-UniRule"/>
</dbReference>
<dbReference type="GO" id="GO:0008320">
    <property type="term" value="F:protein transmembrane transporter activity"/>
    <property type="evidence" value="ECO:0007669"/>
    <property type="project" value="UniProtKB-UniRule"/>
</dbReference>
<dbReference type="GO" id="GO:0043953">
    <property type="term" value="P:protein transport by the Tat complex"/>
    <property type="evidence" value="ECO:0007669"/>
    <property type="project" value="UniProtKB-UniRule"/>
</dbReference>
<dbReference type="Gene3D" id="1.20.5.3310">
    <property type="match status" value="1"/>
</dbReference>
<dbReference type="HAMAP" id="MF_00236">
    <property type="entry name" value="TatA_E"/>
    <property type="match status" value="1"/>
</dbReference>
<dbReference type="InterPro" id="IPR003369">
    <property type="entry name" value="TatA/B/E"/>
</dbReference>
<dbReference type="InterPro" id="IPR006312">
    <property type="entry name" value="TatA/E"/>
</dbReference>
<dbReference type="NCBIfam" id="NF002813">
    <property type="entry name" value="PRK02958.1"/>
    <property type="match status" value="1"/>
</dbReference>
<dbReference type="NCBIfam" id="TIGR01411">
    <property type="entry name" value="tatAE"/>
    <property type="match status" value="1"/>
</dbReference>
<dbReference type="PANTHER" id="PTHR42982">
    <property type="entry name" value="SEC-INDEPENDENT PROTEIN TRANSLOCASE PROTEIN TATA"/>
    <property type="match status" value="1"/>
</dbReference>
<dbReference type="PANTHER" id="PTHR42982:SF1">
    <property type="entry name" value="SEC-INDEPENDENT PROTEIN TRANSLOCASE PROTEIN TATA"/>
    <property type="match status" value="1"/>
</dbReference>
<dbReference type="Pfam" id="PF02416">
    <property type="entry name" value="TatA_B_E"/>
    <property type="match status" value="1"/>
</dbReference>
<gene>
    <name evidence="1" type="primary">tatA</name>
    <name type="ordered locus">Sde_3224</name>
</gene>
<proteinExistence type="inferred from homology"/>
<protein>
    <recommendedName>
        <fullName evidence="1">Sec-independent protein translocase protein TatA</fullName>
    </recommendedName>
</protein>
<evidence type="ECO:0000255" key="1">
    <source>
        <dbReference type="HAMAP-Rule" id="MF_00236"/>
    </source>
</evidence>
<evidence type="ECO:0000256" key="2">
    <source>
        <dbReference type="SAM" id="MobiDB-lite"/>
    </source>
</evidence>
<organism>
    <name type="scientific">Saccharophagus degradans (strain 2-40 / ATCC 43961 / DSM 17024)</name>
    <dbReference type="NCBI Taxonomy" id="203122"/>
    <lineage>
        <taxon>Bacteria</taxon>
        <taxon>Pseudomonadati</taxon>
        <taxon>Pseudomonadota</taxon>
        <taxon>Gammaproteobacteria</taxon>
        <taxon>Cellvibrionales</taxon>
        <taxon>Cellvibrionaceae</taxon>
        <taxon>Saccharophagus</taxon>
    </lineage>
</organism>
<sequence>MGLGGISIWQLLIVLVIVLLLFGTKRLKGLGGDLGGAIKGFKKAMSDDEAAKQEAEEAEQKKVAAEEAAAAKTAEQKEKTEAK</sequence>
<name>TATA_SACD2</name>
<comment type="function">
    <text evidence="1">Part of the twin-arginine translocation (Tat) system that transports large folded proteins containing a characteristic twin-arginine motif in their signal peptide across membranes. TatA could form the protein-conducting channel of the Tat system.</text>
</comment>
<comment type="subunit">
    <text evidence="1">The Tat system comprises two distinct complexes: a TatABC complex, containing multiple copies of TatA, TatB and TatC subunits, and a separate TatA complex, containing only TatA subunits. Substrates initially bind to the TatABC complex, which probably triggers association of the separate TatA complex to form the active translocon.</text>
</comment>
<comment type="subcellular location">
    <subcellularLocation>
        <location evidence="1">Cell inner membrane</location>
        <topology evidence="1">Single-pass membrane protein</topology>
    </subcellularLocation>
</comment>
<comment type="similarity">
    <text evidence="1">Belongs to the TatA/E family.</text>
</comment>